<dbReference type="EC" id="1.1.1.42" evidence="1"/>
<dbReference type="EMBL" id="AE006914">
    <property type="protein sequence ID" value="AAL02891.1"/>
    <property type="molecule type" value="Genomic_DNA"/>
</dbReference>
<dbReference type="PIR" id="A97744">
    <property type="entry name" value="A97744"/>
</dbReference>
<dbReference type="RefSeq" id="WP_010977008.1">
    <property type="nucleotide sequence ID" value="NC_003103.1"/>
</dbReference>
<dbReference type="SMR" id="Q92IR7"/>
<dbReference type="GeneID" id="927516"/>
<dbReference type="KEGG" id="rco:RC0353"/>
<dbReference type="PATRIC" id="fig|272944.4.peg.402"/>
<dbReference type="HOGENOM" id="CLU_031953_1_2_5"/>
<dbReference type="Proteomes" id="UP000000816">
    <property type="component" value="Chromosome"/>
</dbReference>
<dbReference type="GO" id="GO:0004449">
    <property type="term" value="F:isocitrate dehydrogenase (NAD+) activity"/>
    <property type="evidence" value="ECO:0007669"/>
    <property type="project" value="TreeGrafter"/>
</dbReference>
<dbReference type="GO" id="GO:0004450">
    <property type="term" value="F:isocitrate dehydrogenase (NADP+) activity"/>
    <property type="evidence" value="ECO:0007669"/>
    <property type="project" value="UniProtKB-EC"/>
</dbReference>
<dbReference type="GO" id="GO:0000287">
    <property type="term" value="F:magnesium ion binding"/>
    <property type="evidence" value="ECO:0007669"/>
    <property type="project" value="InterPro"/>
</dbReference>
<dbReference type="GO" id="GO:0051287">
    <property type="term" value="F:NAD binding"/>
    <property type="evidence" value="ECO:0007669"/>
    <property type="project" value="InterPro"/>
</dbReference>
<dbReference type="GO" id="GO:0006097">
    <property type="term" value="P:glyoxylate cycle"/>
    <property type="evidence" value="ECO:0007669"/>
    <property type="project" value="UniProtKB-KW"/>
</dbReference>
<dbReference type="GO" id="GO:0006102">
    <property type="term" value="P:isocitrate metabolic process"/>
    <property type="evidence" value="ECO:0007669"/>
    <property type="project" value="TreeGrafter"/>
</dbReference>
<dbReference type="GO" id="GO:0006099">
    <property type="term" value="P:tricarboxylic acid cycle"/>
    <property type="evidence" value="ECO:0007669"/>
    <property type="project" value="UniProtKB-KW"/>
</dbReference>
<dbReference type="FunFam" id="3.40.718.10:FF:000020">
    <property type="entry name" value="Isocitrate dehydrogenase"/>
    <property type="match status" value="1"/>
</dbReference>
<dbReference type="Gene3D" id="3.30.70.1570">
    <property type="match status" value="1"/>
</dbReference>
<dbReference type="Gene3D" id="3.40.718.10">
    <property type="entry name" value="Isopropylmalate Dehydrogenase"/>
    <property type="match status" value="1"/>
</dbReference>
<dbReference type="InterPro" id="IPR019818">
    <property type="entry name" value="IsoCit/isopropylmalate_DH_CS"/>
</dbReference>
<dbReference type="InterPro" id="IPR014273">
    <property type="entry name" value="Isocitrate_DH_bac-typ"/>
</dbReference>
<dbReference type="InterPro" id="IPR040978">
    <property type="entry name" value="Isocitrate_DH_TT1725_C"/>
</dbReference>
<dbReference type="InterPro" id="IPR046997">
    <property type="entry name" value="Isocitrate_DH_TT1725_C_sf"/>
</dbReference>
<dbReference type="InterPro" id="IPR024084">
    <property type="entry name" value="IsoPropMal-DH-like_dom"/>
</dbReference>
<dbReference type="NCBIfam" id="TIGR02924">
    <property type="entry name" value="ICDH_alpha"/>
    <property type="match status" value="1"/>
</dbReference>
<dbReference type="NCBIfam" id="NF006673">
    <property type="entry name" value="PRK09222.1"/>
    <property type="match status" value="1"/>
</dbReference>
<dbReference type="PANTHER" id="PTHR11835">
    <property type="entry name" value="DECARBOXYLATING DEHYDROGENASES-ISOCITRATE, ISOPROPYLMALATE, TARTRATE"/>
    <property type="match status" value="1"/>
</dbReference>
<dbReference type="PANTHER" id="PTHR11835:SF43">
    <property type="entry name" value="ISOPROPYLMALATE DEHYDROGENASE-LIKE DOMAIN-CONTAINING PROTEIN"/>
    <property type="match status" value="1"/>
</dbReference>
<dbReference type="Pfam" id="PF00180">
    <property type="entry name" value="Iso_dh"/>
    <property type="match status" value="1"/>
</dbReference>
<dbReference type="Pfam" id="PF18324">
    <property type="entry name" value="Isocitrate_DH_C_bact"/>
    <property type="match status" value="1"/>
</dbReference>
<dbReference type="SMART" id="SM01329">
    <property type="entry name" value="Iso_dh"/>
    <property type="match status" value="1"/>
</dbReference>
<dbReference type="SUPFAM" id="SSF53659">
    <property type="entry name" value="Isocitrate/Isopropylmalate dehydrogenase-like"/>
    <property type="match status" value="1"/>
</dbReference>
<dbReference type="PROSITE" id="PS00470">
    <property type="entry name" value="IDH_IMDH"/>
    <property type="match status" value="1"/>
</dbReference>
<reference key="1">
    <citation type="journal article" date="2001" name="Science">
        <title>Mechanisms of evolution in Rickettsia conorii and R. prowazekii.</title>
        <authorList>
            <person name="Ogata H."/>
            <person name="Audic S."/>
            <person name="Renesto-Audiffren P."/>
            <person name="Fournier P.-E."/>
            <person name="Barbe V."/>
            <person name="Samson D."/>
            <person name="Roux V."/>
            <person name="Cossart P."/>
            <person name="Weissenbach J."/>
            <person name="Claverie J.-M."/>
            <person name="Raoult D."/>
        </authorList>
    </citation>
    <scope>NUCLEOTIDE SEQUENCE [LARGE SCALE GENOMIC DNA]</scope>
    <source>
        <strain>ATCC VR-613 / Malish 7</strain>
    </source>
</reference>
<comment type="function">
    <text evidence="1">Catalyzes the oxidative decarboxylation of isocitrate to 2-oxoglutarate and carbon dioxide with the concomitant reduction of NADP(+).</text>
</comment>
<comment type="catalytic activity">
    <reaction evidence="1">
        <text>D-threo-isocitrate + NADP(+) = 2-oxoglutarate + CO2 + NADPH</text>
        <dbReference type="Rhea" id="RHEA:19629"/>
        <dbReference type="ChEBI" id="CHEBI:15562"/>
        <dbReference type="ChEBI" id="CHEBI:16526"/>
        <dbReference type="ChEBI" id="CHEBI:16810"/>
        <dbReference type="ChEBI" id="CHEBI:57783"/>
        <dbReference type="ChEBI" id="CHEBI:58349"/>
        <dbReference type="EC" id="1.1.1.42"/>
    </reaction>
</comment>
<comment type="cofactor">
    <cofactor evidence="1">
        <name>Mg(2+)</name>
        <dbReference type="ChEBI" id="CHEBI:18420"/>
    </cofactor>
    <cofactor evidence="1">
        <name>Mn(2+)</name>
        <dbReference type="ChEBI" id="CHEBI:29035"/>
    </cofactor>
    <text evidence="1">Binds 1 Mg(2+) or Mn(2+) ion per subunit.</text>
</comment>
<comment type="subunit">
    <text evidence="1">Homodimer.</text>
</comment>
<comment type="similarity">
    <text evidence="2">Belongs to the isocitrate and isopropylmalate dehydrogenases family.</text>
</comment>
<proteinExistence type="inferred from homology"/>
<sequence>MAEFTPITIAYGDGIGPEIMEAVLYILRKAEARIRLETIEVGEKLYKKHYTSGISEESWESIQRTGIILKAPITTPQGGGYKSLNVTIRKTLQLFANIRPAVSLHPFTRTLHPNLNLTIIRENEEDLYAGIEYRQTHNMYESMKLISHTGCEKIIRYAFEYAVKNNRKKVMCLSKDNIMKFSDGVLHKVFNEIAKEYPQINNAHYIIDIGTARLATKPEIFDVIVTSNLYGDIISDVAAEISGSVGLAGSANIGQHYAMFEAVHGSAPDIAGKDIANPSGLLNAAIMMLVHIGQGDIATLIENAWKKTIEDGVHTADIYNEQSSSKKVGTKEFAEEVTKRLGQLPTKLPKADYPLIAEKQESNIDYKIDTKEVKKLVGTDIFVNMNVSSAHDIADKINKLDLGNFELKTISSKGLKLWPRDTRFETVSDHWCCRFMNKDGTEIKHLDITRLLEALSTANIDFIKVENLFEFDGVAGYSLAQGE</sequence>
<gene>
    <name type="primary">icd</name>
    <name type="ordered locus">RC0353</name>
</gene>
<protein>
    <recommendedName>
        <fullName>Isocitrate dehydrogenase [NADP]</fullName>
        <shortName>IDH</shortName>
        <ecNumber evidence="1">1.1.1.42</ecNumber>
    </recommendedName>
    <alternativeName>
        <fullName>IDP</fullName>
    </alternativeName>
    <alternativeName>
        <fullName>NADP(+)-specific ICDH</fullName>
    </alternativeName>
    <alternativeName>
        <fullName>Oxalosuccinate decarboxylase</fullName>
    </alternativeName>
</protein>
<evidence type="ECO:0000250" key="1">
    <source>
        <dbReference type="UniProtKB" id="P08200"/>
    </source>
</evidence>
<evidence type="ECO:0000305" key="2"/>
<name>IDH_RICCN</name>
<feature type="chain" id="PRO_0000083556" description="Isocitrate dehydrogenase [NADP]">
    <location>
        <begin position="1"/>
        <end position="483"/>
    </location>
</feature>
<feature type="binding site" evidence="1">
    <location>
        <position position="74"/>
    </location>
    <ligand>
        <name>NADP(+)</name>
        <dbReference type="ChEBI" id="CHEBI:58349"/>
    </ligand>
</feature>
<feature type="binding site" evidence="1">
    <location>
        <position position="83"/>
    </location>
    <ligand>
        <name>D-threo-isocitrate</name>
        <dbReference type="ChEBI" id="CHEBI:15562"/>
    </ligand>
</feature>
<feature type="binding site" evidence="1">
    <location>
        <position position="85"/>
    </location>
    <ligand>
        <name>D-threo-isocitrate</name>
        <dbReference type="ChEBI" id="CHEBI:15562"/>
    </ligand>
</feature>
<feature type="binding site" evidence="1">
    <location>
        <position position="89"/>
    </location>
    <ligand>
        <name>D-threo-isocitrate</name>
        <dbReference type="ChEBI" id="CHEBI:15562"/>
    </ligand>
</feature>
<feature type="binding site" evidence="1">
    <location>
        <position position="99"/>
    </location>
    <ligand>
        <name>D-threo-isocitrate</name>
        <dbReference type="ChEBI" id="CHEBI:15562"/>
    </ligand>
</feature>
<feature type="binding site" evidence="1">
    <location>
        <position position="121"/>
    </location>
    <ligand>
        <name>D-threo-isocitrate</name>
        <dbReference type="ChEBI" id="CHEBI:15562"/>
    </ligand>
</feature>
<feature type="binding site" evidence="1">
    <location>
        <position position="232"/>
    </location>
    <ligand>
        <name>Mg(2+)</name>
        <dbReference type="ChEBI" id="CHEBI:18420"/>
    </ligand>
</feature>
<feature type="binding site" evidence="1">
    <location>
        <begin position="264"/>
        <end position="270"/>
    </location>
    <ligand>
        <name>NADP(+)</name>
        <dbReference type="ChEBI" id="CHEBI:58349"/>
    </ligand>
</feature>
<feature type="binding site" evidence="1">
    <location>
        <position position="277"/>
    </location>
    <ligand>
        <name>NADP(+)</name>
        <dbReference type="ChEBI" id="CHEBI:58349"/>
    </ligand>
</feature>
<feature type="site" description="Critical for catalysis" evidence="1">
    <location>
        <position position="128"/>
    </location>
</feature>
<feature type="site" description="Critical for catalysis" evidence="1">
    <location>
        <position position="175"/>
    </location>
</feature>
<organism>
    <name type="scientific">Rickettsia conorii (strain ATCC VR-613 / Malish 7)</name>
    <dbReference type="NCBI Taxonomy" id="272944"/>
    <lineage>
        <taxon>Bacteria</taxon>
        <taxon>Pseudomonadati</taxon>
        <taxon>Pseudomonadota</taxon>
        <taxon>Alphaproteobacteria</taxon>
        <taxon>Rickettsiales</taxon>
        <taxon>Rickettsiaceae</taxon>
        <taxon>Rickettsieae</taxon>
        <taxon>Rickettsia</taxon>
        <taxon>spotted fever group</taxon>
    </lineage>
</organism>
<accession>Q92IR7</accession>
<keyword id="KW-0329">Glyoxylate bypass</keyword>
<keyword id="KW-0460">Magnesium</keyword>
<keyword id="KW-0464">Manganese</keyword>
<keyword id="KW-0479">Metal-binding</keyword>
<keyword id="KW-0521">NADP</keyword>
<keyword id="KW-0560">Oxidoreductase</keyword>
<keyword id="KW-0816">Tricarboxylic acid cycle</keyword>